<organism>
    <name type="scientific">Bacillus subtilis (strain 168)</name>
    <dbReference type="NCBI Taxonomy" id="224308"/>
    <lineage>
        <taxon>Bacteria</taxon>
        <taxon>Bacillati</taxon>
        <taxon>Bacillota</taxon>
        <taxon>Bacilli</taxon>
        <taxon>Bacillales</taxon>
        <taxon>Bacillaceae</taxon>
        <taxon>Bacillus</taxon>
    </lineage>
</organism>
<gene>
    <name type="primary">immA</name>
    <name type="synonym">ydcM</name>
    <name type="ordered locus">BSU04810</name>
</gene>
<reference key="1">
    <citation type="submission" date="1997-03" db="EMBL/GenBank/DDBJ databases">
        <title>A 148 kbp sequence of the region between 35 and 47 degree of the Bacillus subtilis genome.</title>
        <authorList>
            <person name="Kasahara Y."/>
            <person name="Nakai S."/>
            <person name="Lee S."/>
            <person name="Sadaie Y."/>
            <person name="Ogasawara N."/>
        </authorList>
    </citation>
    <scope>NUCLEOTIDE SEQUENCE [GENOMIC DNA]</scope>
    <source>
        <strain>168</strain>
    </source>
</reference>
<reference key="2">
    <citation type="journal article" date="1997" name="Nature">
        <title>The complete genome sequence of the Gram-positive bacterium Bacillus subtilis.</title>
        <authorList>
            <person name="Kunst F."/>
            <person name="Ogasawara N."/>
            <person name="Moszer I."/>
            <person name="Albertini A.M."/>
            <person name="Alloni G."/>
            <person name="Azevedo V."/>
            <person name="Bertero M.G."/>
            <person name="Bessieres P."/>
            <person name="Bolotin A."/>
            <person name="Borchert S."/>
            <person name="Borriss R."/>
            <person name="Boursier L."/>
            <person name="Brans A."/>
            <person name="Braun M."/>
            <person name="Brignell S.C."/>
            <person name="Bron S."/>
            <person name="Brouillet S."/>
            <person name="Bruschi C.V."/>
            <person name="Caldwell B."/>
            <person name="Capuano V."/>
            <person name="Carter N.M."/>
            <person name="Choi S.-K."/>
            <person name="Codani J.-J."/>
            <person name="Connerton I.F."/>
            <person name="Cummings N.J."/>
            <person name="Daniel R.A."/>
            <person name="Denizot F."/>
            <person name="Devine K.M."/>
            <person name="Duesterhoeft A."/>
            <person name="Ehrlich S.D."/>
            <person name="Emmerson P.T."/>
            <person name="Entian K.-D."/>
            <person name="Errington J."/>
            <person name="Fabret C."/>
            <person name="Ferrari E."/>
            <person name="Foulger D."/>
            <person name="Fritz C."/>
            <person name="Fujita M."/>
            <person name="Fujita Y."/>
            <person name="Fuma S."/>
            <person name="Galizzi A."/>
            <person name="Galleron N."/>
            <person name="Ghim S.-Y."/>
            <person name="Glaser P."/>
            <person name="Goffeau A."/>
            <person name="Golightly E.J."/>
            <person name="Grandi G."/>
            <person name="Guiseppi G."/>
            <person name="Guy B.J."/>
            <person name="Haga K."/>
            <person name="Haiech J."/>
            <person name="Harwood C.R."/>
            <person name="Henaut A."/>
            <person name="Hilbert H."/>
            <person name="Holsappel S."/>
            <person name="Hosono S."/>
            <person name="Hullo M.-F."/>
            <person name="Itaya M."/>
            <person name="Jones L.-M."/>
            <person name="Joris B."/>
            <person name="Karamata D."/>
            <person name="Kasahara Y."/>
            <person name="Klaerr-Blanchard M."/>
            <person name="Klein C."/>
            <person name="Kobayashi Y."/>
            <person name="Koetter P."/>
            <person name="Koningstein G."/>
            <person name="Krogh S."/>
            <person name="Kumano M."/>
            <person name="Kurita K."/>
            <person name="Lapidus A."/>
            <person name="Lardinois S."/>
            <person name="Lauber J."/>
            <person name="Lazarevic V."/>
            <person name="Lee S.-M."/>
            <person name="Levine A."/>
            <person name="Liu H."/>
            <person name="Masuda S."/>
            <person name="Mauel C."/>
            <person name="Medigue C."/>
            <person name="Medina N."/>
            <person name="Mellado R.P."/>
            <person name="Mizuno M."/>
            <person name="Moestl D."/>
            <person name="Nakai S."/>
            <person name="Noback M."/>
            <person name="Noone D."/>
            <person name="O'Reilly M."/>
            <person name="Ogawa K."/>
            <person name="Ogiwara A."/>
            <person name="Oudega B."/>
            <person name="Park S.-H."/>
            <person name="Parro V."/>
            <person name="Pohl T.M."/>
            <person name="Portetelle D."/>
            <person name="Porwollik S."/>
            <person name="Prescott A.M."/>
            <person name="Presecan E."/>
            <person name="Pujic P."/>
            <person name="Purnelle B."/>
            <person name="Rapoport G."/>
            <person name="Rey M."/>
            <person name="Reynolds S."/>
            <person name="Rieger M."/>
            <person name="Rivolta C."/>
            <person name="Rocha E."/>
            <person name="Roche B."/>
            <person name="Rose M."/>
            <person name="Sadaie Y."/>
            <person name="Sato T."/>
            <person name="Scanlan E."/>
            <person name="Schleich S."/>
            <person name="Schroeter R."/>
            <person name="Scoffone F."/>
            <person name="Sekiguchi J."/>
            <person name="Sekowska A."/>
            <person name="Seror S.J."/>
            <person name="Serror P."/>
            <person name="Shin B.-S."/>
            <person name="Soldo B."/>
            <person name="Sorokin A."/>
            <person name="Tacconi E."/>
            <person name="Takagi T."/>
            <person name="Takahashi H."/>
            <person name="Takemaru K."/>
            <person name="Takeuchi M."/>
            <person name="Tamakoshi A."/>
            <person name="Tanaka T."/>
            <person name="Terpstra P."/>
            <person name="Tognoni A."/>
            <person name="Tosato V."/>
            <person name="Uchiyama S."/>
            <person name="Vandenbol M."/>
            <person name="Vannier F."/>
            <person name="Vassarotti A."/>
            <person name="Viari A."/>
            <person name="Wambutt R."/>
            <person name="Wedler E."/>
            <person name="Wedler H."/>
            <person name="Weitzenegger T."/>
            <person name="Winters P."/>
            <person name="Wipat A."/>
            <person name="Yamamoto H."/>
            <person name="Yamane K."/>
            <person name="Yasumoto K."/>
            <person name="Yata K."/>
            <person name="Yoshida K."/>
            <person name="Yoshikawa H.-F."/>
            <person name="Zumstein E."/>
            <person name="Yoshikawa H."/>
            <person name="Danchin A."/>
        </authorList>
    </citation>
    <scope>NUCLEOTIDE SEQUENCE [LARGE SCALE GENOMIC DNA]</scope>
    <source>
        <strain>168</strain>
    </source>
</reference>
<reference key="3">
    <citation type="journal article" date="2008" name="Mol. Microbiol.">
        <title>A conserved anti-repressor controls horizontal gene transfer by proteolysis.</title>
        <authorList>
            <person name="Bose B."/>
            <person name="Auchtung J.M."/>
            <person name="Lee C.A."/>
            <person name="Grossman A.D."/>
        </authorList>
    </citation>
    <scope>FUNCTION</scope>
    <scope>INTERACTION WITH IMMR</scope>
</reference>
<comment type="function">
    <text evidence="2">Involved in the regulation of horizontal gene transfer through the integrative and conjugative element ICEBs1. Required for degradation of the ICEBs1 repressor protein ImmR/YdcN.</text>
</comment>
<comment type="subunit">
    <text evidence="2">Interacts with ImmR.</text>
</comment>
<proteinExistence type="evidence at protein level"/>
<keyword id="KW-0378">Hydrolase</keyword>
<keyword id="KW-0479">Metal-binding</keyword>
<keyword id="KW-0482">Metalloprotease</keyword>
<keyword id="KW-0645">Protease</keyword>
<keyword id="KW-1185">Reference proteome</keyword>
<keyword id="KW-0862">Zinc</keyword>
<name>IMMA_BACSU</name>
<protein>
    <recommendedName>
        <fullName>Metallopeptidase ImmA</fullName>
        <ecNumber>3.4.-.-</ecNumber>
    </recommendedName>
</protein>
<feature type="chain" id="PRO_0000360214" description="Metallopeptidase ImmA">
    <location>
        <begin position="1"/>
        <end position="169"/>
    </location>
</feature>
<feature type="active site" evidence="1">
    <location>
        <position position="76"/>
    </location>
</feature>
<feature type="binding site" evidence="1">
    <location>
        <position position="75"/>
    </location>
    <ligand>
        <name>Zn(2+)</name>
        <dbReference type="ChEBI" id="CHEBI:29105"/>
        <note>catalytic</note>
    </ligand>
</feature>
<feature type="binding site" evidence="1">
    <location>
        <position position="79"/>
    </location>
    <ligand>
        <name>Zn(2+)</name>
        <dbReference type="ChEBI" id="CHEBI:29105"/>
        <note>catalytic</note>
    </ligand>
</feature>
<dbReference type="EC" id="3.4.-.-"/>
<dbReference type="EMBL" id="AB001488">
    <property type="protein sequence ID" value="BAA19319.1"/>
    <property type="molecule type" value="Genomic_DNA"/>
</dbReference>
<dbReference type="EMBL" id="AL009126">
    <property type="protein sequence ID" value="CAB12288.1"/>
    <property type="molecule type" value="Genomic_DNA"/>
</dbReference>
<dbReference type="PIR" id="B69774">
    <property type="entry name" value="B69774"/>
</dbReference>
<dbReference type="RefSeq" id="NP_388362.1">
    <property type="nucleotide sequence ID" value="NC_000964.3"/>
</dbReference>
<dbReference type="RefSeq" id="WP_009966616.1">
    <property type="nucleotide sequence ID" value="NZ_OZ025638.1"/>
</dbReference>
<dbReference type="SMR" id="P96630"/>
<dbReference type="FunCoup" id="P96630">
    <property type="interactions" value="16"/>
</dbReference>
<dbReference type="STRING" id="224308.BSU04810"/>
<dbReference type="MEROPS" id="M78.001"/>
<dbReference type="PaxDb" id="224308-BSU04810"/>
<dbReference type="EnsemblBacteria" id="CAB12288">
    <property type="protein sequence ID" value="CAB12288"/>
    <property type="gene ID" value="BSU_04810"/>
</dbReference>
<dbReference type="GeneID" id="939924"/>
<dbReference type="KEGG" id="bsu:BSU04810"/>
<dbReference type="PATRIC" id="fig|224308.179.peg.511"/>
<dbReference type="eggNOG" id="COG2856">
    <property type="taxonomic scope" value="Bacteria"/>
</dbReference>
<dbReference type="InParanoid" id="P96630"/>
<dbReference type="OrthoDB" id="9816277at2"/>
<dbReference type="BioCyc" id="BSUB:BSU04810-MONOMER"/>
<dbReference type="Proteomes" id="UP000001570">
    <property type="component" value="Chromosome"/>
</dbReference>
<dbReference type="GO" id="GO:0046872">
    <property type="term" value="F:metal ion binding"/>
    <property type="evidence" value="ECO:0007669"/>
    <property type="project" value="UniProtKB-KW"/>
</dbReference>
<dbReference type="GO" id="GO:0008237">
    <property type="term" value="F:metallopeptidase activity"/>
    <property type="evidence" value="ECO:0007669"/>
    <property type="project" value="UniProtKB-KW"/>
</dbReference>
<dbReference type="GO" id="GO:0006508">
    <property type="term" value="P:proteolysis"/>
    <property type="evidence" value="ECO:0007669"/>
    <property type="project" value="UniProtKB-KW"/>
</dbReference>
<dbReference type="Gene3D" id="1.10.10.2910">
    <property type="match status" value="1"/>
</dbReference>
<dbReference type="InterPro" id="IPR010359">
    <property type="entry name" value="IrrE_HExxH"/>
</dbReference>
<dbReference type="Pfam" id="PF06114">
    <property type="entry name" value="Peptidase_M78"/>
    <property type="match status" value="1"/>
</dbReference>
<dbReference type="PROSITE" id="PS00142">
    <property type="entry name" value="ZINC_PROTEASE"/>
    <property type="match status" value="1"/>
</dbReference>
<evidence type="ECO:0000255" key="1">
    <source>
        <dbReference type="PROSITE-ProRule" id="PRU10095"/>
    </source>
</evidence>
<evidence type="ECO:0000269" key="2">
    <source>
    </source>
</evidence>
<accession>P96630</accession>
<accession>Q797K0</accession>
<sequence>MITIYTSKGIKHKVQSVIKTHGTNNVYEICDIQKIYILKNDLGQANGLLQHDKATDQYLIHINENLQHQQFVIAHELGHYFLHKRLNTFKVVNCSKVLKDKLEHQASLFASELILTDKMLNEALPYIQGFSKEQIAAYFNVPSFVTDYKLSQIGSFSNRIYSHEISAFG</sequence>